<protein>
    <recommendedName>
        <fullName evidence="1">Aminomethyltransferase</fullName>
        <ecNumber evidence="1">2.1.2.10</ecNumber>
    </recommendedName>
    <alternativeName>
        <fullName evidence="1">Glycine cleavage system T protein</fullName>
    </alternativeName>
</protein>
<name>GCST_GEOKA</name>
<organism>
    <name type="scientific">Geobacillus kaustophilus (strain HTA426)</name>
    <dbReference type="NCBI Taxonomy" id="235909"/>
    <lineage>
        <taxon>Bacteria</taxon>
        <taxon>Bacillati</taxon>
        <taxon>Bacillota</taxon>
        <taxon>Bacilli</taxon>
        <taxon>Bacillales</taxon>
        <taxon>Anoxybacillaceae</taxon>
        <taxon>Geobacillus</taxon>
        <taxon>Geobacillus thermoleovorans group</taxon>
    </lineage>
</organism>
<reference key="1">
    <citation type="journal article" date="2004" name="Nucleic Acids Res.">
        <title>Thermoadaptation trait revealed by the genome sequence of thermophilic Geobacillus kaustophilus.</title>
        <authorList>
            <person name="Takami H."/>
            <person name="Takaki Y."/>
            <person name="Chee G.-J."/>
            <person name="Nishi S."/>
            <person name="Shimamura S."/>
            <person name="Suzuki H."/>
            <person name="Matsui S."/>
            <person name="Uchiyama I."/>
        </authorList>
    </citation>
    <scope>NUCLEOTIDE SEQUENCE [LARGE SCALE GENOMIC DNA]</scope>
    <source>
        <strain>HTA426</strain>
    </source>
</reference>
<feature type="chain" id="PRO_0000122559" description="Aminomethyltransferase">
    <location>
        <begin position="1"/>
        <end position="364"/>
    </location>
</feature>
<accession>Q5KX76</accession>
<comment type="function">
    <text evidence="1">The glycine cleavage system catalyzes the degradation of glycine.</text>
</comment>
<comment type="catalytic activity">
    <reaction evidence="1">
        <text>N(6)-[(R)-S(8)-aminomethyldihydrolipoyl]-L-lysyl-[protein] + (6S)-5,6,7,8-tetrahydrofolate = N(6)-[(R)-dihydrolipoyl]-L-lysyl-[protein] + (6R)-5,10-methylene-5,6,7,8-tetrahydrofolate + NH4(+)</text>
        <dbReference type="Rhea" id="RHEA:16945"/>
        <dbReference type="Rhea" id="RHEA-COMP:10475"/>
        <dbReference type="Rhea" id="RHEA-COMP:10492"/>
        <dbReference type="ChEBI" id="CHEBI:15636"/>
        <dbReference type="ChEBI" id="CHEBI:28938"/>
        <dbReference type="ChEBI" id="CHEBI:57453"/>
        <dbReference type="ChEBI" id="CHEBI:83100"/>
        <dbReference type="ChEBI" id="CHEBI:83143"/>
        <dbReference type="EC" id="2.1.2.10"/>
    </reaction>
</comment>
<comment type="subunit">
    <text evidence="1">The glycine cleavage system is composed of four proteins: P, T, L and H.</text>
</comment>
<comment type="similarity">
    <text evidence="1">Belongs to the GcvT family.</text>
</comment>
<gene>
    <name evidence="1" type="primary">gcvT</name>
    <name type="ordered locus">GK2425</name>
</gene>
<proteinExistence type="inferred from homology"/>
<evidence type="ECO:0000255" key="1">
    <source>
        <dbReference type="HAMAP-Rule" id="MF_00259"/>
    </source>
</evidence>
<dbReference type="EC" id="2.1.2.10" evidence="1"/>
<dbReference type="EMBL" id="BA000043">
    <property type="protein sequence ID" value="BAD76710.1"/>
    <property type="molecule type" value="Genomic_DNA"/>
</dbReference>
<dbReference type="RefSeq" id="WP_011231907.1">
    <property type="nucleotide sequence ID" value="NC_006510.1"/>
</dbReference>
<dbReference type="SMR" id="Q5KX76"/>
<dbReference type="STRING" id="235909.GK2425"/>
<dbReference type="GeneID" id="32064311"/>
<dbReference type="KEGG" id="gka:GK2425"/>
<dbReference type="eggNOG" id="COG0404">
    <property type="taxonomic scope" value="Bacteria"/>
</dbReference>
<dbReference type="HOGENOM" id="CLU_007884_10_2_9"/>
<dbReference type="Proteomes" id="UP000001172">
    <property type="component" value="Chromosome"/>
</dbReference>
<dbReference type="GO" id="GO:0005829">
    <property type="term" value="C:cytosol"/>
    <property type="evidence" value="ECO:0007669"/>
    <property type="project" value="TreeGrafter"/>
</dbReference>
<dbReference type="GO" id="GO:0005960">
    <property type="term" value="C:glycine cleavage complex"/>
    <property type="evidence" value="ECO:0007669"/>
    <property type="project" value="InterPro"/>
</dbReference>
<dbReference type="GO" id="GO:0004047">
    <property type="term" value="F:aminomethyltransferase activity"/>
    <property type="evidence" value="ECO:0007669"/>
    <property type="project" value="UniProtKB-UniRule"/>
</dbReference>
<dbReference type="GO" id="GO:0008483">
    <property type="term" value="F:transaminase activity"/>
    <property type="evidence" value="ECO:0007669"/>
    <property type="project" value="UniProtKB-KW"/>
</dbReference>
<dbReference type="GO" id="GO:0019464">
    <property type="term" value="P:glycine decarboxylation via glycine cleavage system"/>
    <property type="evidence" value="ECO:0007669"/>
    <property type="project" value="UniProtKB-UniRule"/>
</dbReference>
<dbReference type="FunFam" id="2.40.30.110:FF:000003">
    <property type="entry name" value="Aminomethyltransferase"/>
    <property type="match status" value="1"/>
</dbReference>
<dbReference type="FunFam" id="3.30.70.1400:FF:000001">
    <property type="entry name" value="Aminomethyltransferase"/>
    <property type="match status" value="1"/>
</dbReference>
<dbReference type="FunFam" id="4.10.1250.10:FF:000001">
    <property type="entry name" value="Aminomethyltransferase"/>
    <property type="match status" value="1"/>
</dbReference>
<dbReference type="Gene3D" id="2.40.30.110">
    <property type="entry name" value="Aminomethyltransferase beta-barrel domains"/>
    <property type="match status" value="1"/>
</dbReference>
<dbReference type="Gene3D" id="3.30.70.1400">
    <property type="entry name" value="Aminomethyltransferase beta-barrel domains"/>
    <property type="match status" value="1"/>
</dbReference>
<dbReference type="Gene3D" id="4.10.1250.10">
    <property type="entry name" value="Aminomethyltransferase fragment"/>
    <property type="match status" value="1"/>
</dbReference>
<dbReference type="Gene3D" id="3.30.1360.120">
    <property type="entry name" value="Probable tRNA modification gtpase trme, domain 1"/>
    <property type="match status" value="1"/>
</dbReference>
<dbReference type="HAMAP" id="MF_00259">
    <property type="entry name" value="GcvT"/>
    <property type="match status" value="1"/>
</dbReference>
<dbReference type="InterPro" id="IPR006223">
    <property type="entry name" value="GCS_T"/>
</dbReference>
<dbReference type="InterPro" id="IPR022903">
    <property type="entry name" value="GCS_T_bac"/>
</dbReference>
<dbReference type="InterPro" id="IPR013977">
    <property type="entry name" value="GCST_C"/>
</dbReference>
<dbReference type="InterPro" id="IPR006222">
    <property type="entry name" value="GCV_T_N"/>
</dbReference>
<dbReference type="InterPro" id="IPR028896">
    <property type="entry name" value="GcvT/YgfZ/DmdA"/>
</dbReference>
<dbReference type="InterPro" id="IPR029043">
    <property type="entry name" value="GcvT/YgfZ_C"/>
</dbReference>
<dbReference type="InterPro" id="IPR027266">
    <property type="entry name" value="TrmE/GcvT_dom1"/>
</dbReference>
<dbReference type="NCBIfam" id="TIGR00528">
    <property type="entry name" value="gcvT"/>
    <property type="match status" value="1"/>
</dbReference>
<dbReference type="NCBIfam" id="NF001567">
    <property type="entry name" value="PRK00389.1"/>
    <property type="match status" value="1"/>
</dbReference>
<dbReference type="PANTHER" id="PTHR43757">
    <property type="entry name" value="AMINOMETHYLTRANSFERASE"/>
    <property type="match status" value="1"/>
</dbReference>
<dbReference type="PANTHER" id="PTHR43757:SF2">
    <property type="entry name" value="AMINOMETHYLTRANSFERASE, MITOCHONDRIAL"/>
    <property type="match status" value="1"/>
</dbReference>
<dbReference type="Pfam" id="PF01571">
    <property type="entry name" value="GCV_T"/>
    <property type="match status" value="1"/>
</dbReference>
<dbReference type="Pfam" id="PF08669">
    <property type="entry name" value="GCV_T_C"/>
    <property type="match status" value="1"/>
</dbReference>
<dbReference type="PIRSF" id="PIRSF006487">
    <property type="entry name" value="GcvT"/>
    <property type="match status" value="1"/>
</dbReference>
<dbReference type="SUPFAM" id="SSF101790">
    <property type="entry name" value="Aminomethyltransferase beta-barrel domain"/>
    <property type="match status" value="1"/>
</dbReference>
<dbReference type="SUPFAM" id="SSF103025">
    <property type="entry name" value="Folate-binding domain"/>
    <property type="match status" value="1"/>
</dbReference>
<keyword id="KW-0032">Aminotransferase</keyword>
<keyword id="KW-1185">Reference proteome</keyword>
<keyword id="KW-0808">Transferase</keyword>
<sequence length="364" mass="39762">MLKRTPLFSVYARCGAKTIEFGGWEMPVQFSSIKEEHEAVRTRAGLFDVSHMGEIVVRGRGSLAFLQKLMTNDVAKLRPGRAQYTLMCYEDGGTVDDLLIYQKGENDYLLVVNAANTEKDFAWLSGHVEGDVELQDVSSETAQLALQGPAAERVLQRLTDFDLAALRPFSFADGVEVSGVKALVSRTGYTGEDGFELYCKAEDAAALWEAILAAGARDSVLPCGLGARDTLRFEACLPLYGQELSDSISPVEAGLGFAVKTEKETPFIGQAVLKRQKEEGPPRRLVGIEMIDRGIPRHGYLVFADGEEVGFVTTGTQSPTLKKNIGLALVKADVAAIGREVEVDIRGKRLKANIVPIPFYRRAK</sequence>